<reference key="1">
    <citation type="journal article" date="2022" name="J. Infect. Dis.">
        <title>Exportation of Monkeypox virus from the African continent.</title>
        <authorList>
            <person name="Mauldin M.R."/>
            <person name="McCollum A.M."/>
            <person name="Nakazawa Y.J."/>
            <person name="Mandra A."/>
            <person name="Whitehouse E.R."/>
            <person name="Davidson W."/>
            <person name="Zhao H."/>
            <person name="Gao J."/>
            <person name="Li Y."/>
            <person name="Doty J."/>
            <person name="Yinka-Ogunleye A."/>
            <person name="Akinpelu A."/>
            <person name="Aruna O."/>
            <person name="Naidoo D."/>
            <person name="Lewandowski K."/>
            <person name="Afrough B."/>
            <person name="Graham V."/>
            <person name="Aarons E."/>
            <person name="Hewson R."/>
            <person name="Vipond R."/>
            <person name="Dunning J."/>
            <person name="Chand M."/>
            <person name="Brown C."/>
            <person name="Cohen-Gihon I."/>
            <person name="Erez N."/>
            <person name="Shifman O."/>
            <person name="Israeli O."/>
            <person name="Sharon M."/>
            <person name="Schwartz E."/>
            <person name="Beth-Din A."/>
            <person name="Zvi A."/>
            <person name="Mak T.M."/>
            <person name="Ng Y.K."/>
            <person name="Cui L."/>
            <person name="Lin R.T.P."/>
            <person name="Olson V.A."/>
            <person name="Brooks T."/>
            <person name="Paran N."/>
            <person name="Ihekweazu C."/>
            <person name="Reynolds M.G."/>
        </authorList>
    </citation>
    <scope>NUCLEOTIDE SEQUENCE [LARGE SCALE GENOMIC DNA]</scope>
    <source>
        <strain>MPXV-M5312_HM12_Rivers</strain>
    </source>
</reference>
<name>PG160_MONPV</name>
<protein>
    <recommendedName>
        <fullName>DNA packaging protein OPG160</fullName>
    </recommendedName>
</protein>
<sequence length="300" mass="34313">MPSLFSSLLTTLVFHILIYYQINLVTVNIIMNCFQEKQFSRENLLKMPFRMVLTGGSGSGKTIYLLSLFSTLVKKYKHIFLFTPVYNPDYDGYIWPNHINFVSSQEALEYNLIRTKSNIEKCIAVAQNHKKSAHFLLIFDDVGDKLSKCNTLIEFLNFGRHLNTSIILLCQTYRHVPILGRANITHFCSFNISISDAENMLRSMPVKGKRKDILNMLNMIQTARSNNRLAIIIEDSVFCEGELRICTDTADKDVIEQKLNIDILVSQYSHMKKNLNTILESTKTKLCNSDQSSSSKNVSS</sequence>
<evidence type="ECO:0000250" key="1">
    <source>
        <dbReference type="UniProtKB" id="P68615"/>
    </source>
</evidence>
<evidence type="ECO:0000305" key="2"/>
<gene>
    <name type="primary">OPG160</name>
    <name type="ORF">MPXVgp144</name>
</gene>
<comment type="function">
    <text evidence="1">Participates in viral DNA packaging and virion morphogenesis.</text>
</comment>
<comment type="subunit">
    <text evidence="1">Interacts with protein OPG137.</text>
</comment>
<comment type="similarity">
    <text evidence="2">Belongs to the orthopoxvirus OPG160 protein family.</text>
</comment>
<dbReference type="EMBL" id="MT903340">
    <property type="protein sequence ID" value="QNP13014.1"/>
    <property type="molecule type" value="Genomic_DNA"/>
</dbReference>
<dbReference type="RefSeq" id="YP_010377141.1">
    <property type="nucleotide sequence ID" value="NC_063383.1"/>
</dbReference>
<dbReference type="GeneID" id="72551554"/>
<dbReference type="Proteomes" id="UP000516359">
    <property type="component" value="Genome"/>
</dbReference>
<dbReference type="Gene3D" id="3.40.50.300">
    <property type="entry name" value="P-loop containing nucleotide triphosphate hydrolases"/>
    <property type="match status" value="1"/>
</dbReference>
<dbReference type="InterPro" id="IPR006758">
    <property type="entry name" value="A32L"/>
</dbReference>
<dbReference type="InterPro" id="IPR027417">
    <property type="entry name" value="P-loop_NTPase"/>
</dbReference>
<dbReference type="Pfam" id="PF04665">
    <property type="entry name" value="Pox_A32"/>
    <property type="match status" value="1"/>
</dbReference>
<dbReference type="SUPFAM" id="SSF52540">
    <property type="entry name" value="P-loop containing nucleoside triphosphate hydrolases"/>
    <property type="match status" value="1"/>
</dbReference>
<organism>
    <name type="scientific">Monkeypox virus</name>
    <dbReference type="NCBI Taxonomy" id="10244"/>
    <lineage>
        <taxon>Viruses</taxon>
        <taxon>Varidnaviria</taxon>
        <taxon>Bamfordvirae</taxon>
        <taxon>Nucleocytoviricota</taxon>
        <taxon>Pokkesviricetes</taxon>
        <taxon>Chitovirales</taxon>
        <taxon>Poxviridae</taxon>
        <taxon>Chordopoxvirinae</taxon>
        <taxon>Orthopoxvirus</taxon>
    </lineage>
</organism>
<organismHost>
    <name type="scientific">Cynomys gunnisoni</name>
    <name type="common">Gunnison's prairie dog</name>
    <name type="synonym">Spermophilus gunnisoni</name>
    <dbReference type="NCBI Taxonomy" id="45479"/>
</organismHost>
<organismHost>
    <name type="scientific">Cynomys leucurus</name>
    <name type="common">White-tailed prairie dog</name>
    <dbReference type="NCBI Taxonomy" id="99825"/>
</organismHost>
<organismHost>
    <name type="scientific">Cynomys ludovicianus</name>
    <name type="common">Black-tailed prairie dog</name>
    <dbReference type="NCBI Taxonomy" id="45480"/>
</organismHost>
<organismHost>
    <name type="scientific">Cynomys mexicanus</name>
    <name type="common">Mexican prairie dog</name>
    <dbReference type="NCBI Taxonomy" id="99826"/>
</organismHost>
<organismHost>
    <name type="scientific">Cynomys parvidens</name>
    <name type="common">Utah prairie dog</name>
    <dbReference type="NCBI Taxonomy" id="99827"/>
</organismHost>
<organismHost>
    <name type="scientific">Gliridae</name>
    <name type="common">dormice</name>
    <dbReference type="NCBI Taxonomy" id="30650"/>
</organismHost>
<organismHost>
    <name type="scientific">Heliosciurus ruwenzorii</name>
    <name type="common">Ruwenzori sun squirrel</name>
    <dbReference type="NCBI Taxonomy" id="226685"/>
</organismHost>
<organismHost>
    <name type="scientific">Homo sapiens</name>
    <name type="common">Human</name>
    <dbReference type="NCBI Taxonomy" id="9606"/>
</organismHost>
<organismHost>
    <name type="scientific">Mus musculus</name>
    <name type="common">Mouse</name>
    <dbReference type="NCBI Taxonomy" id="10090"/>
</organismHost>
<accession>A0A7H0DND1</accession>
<feature type="chain" id="PRO_0000457543" description="DNA packaging protein OPG160">
    <location>
        <begin position="1"/>
        <end position="300"/>
    </location>
</feature>
<proteinExistence type="inferred from homology"/>
<keyword id="KW-1185">Reference proteome</keyword>